<comment type="function">
    <text evidence="1">Has an important function as a repair enzyme for proteins that have been inactivated by oxidation. Catalyzes the reversible oxidation-reduction of methionine sulfoxide in proteins to methionine (By similarity).</text>
</comment>
<comment type="catalytic activity">
    <reaction>
        <text>L-methionyl-[protein] + [thioredoxin]-disulfide + H2O = L-methionyl-(S)-S-oxide-[protein] + [thioredoxin]-dithiol</text>
        <dbReference type="Rhea" id="RHEA:14217"/>
        <dbReference type="Rhea" id="RHEA-COMP:10698"/>
        <dbReference type="Rhea" id="RHEA-COMP:10700"/>
        <dbReference type="Rhea" id="RHEA-COMP:12313"/>
        <dbReference type="Rhea" id="RHEA-COMP:12315"/>
        <dbReference type="ChEBI" id="CHEBI:15377"/>
        <dbReference type="ChEBI" id="CHEBI:16044"/>
        <dbReference type="ChEBI" id="CHEBI:29950"/>
        <dbReference type="ChEBI" id="CHEBI:44120"/>
        <dbReference type="ChEBI" id="CHEBI:50058"/>
        <dbReference type="EC" id="1.8.4.11"/>
    </reaction>
</comment>
<comment type="catalytic activity">
    <reaction>
        <text>[thioredoxin]-disulfide + L-methionine + H2O = L-methionine (S)-S-oxide + [thioredoxin]-dithiol</text>
        <dbReference type="Rhea" id="RHEA:19993"/>
        <dbReference type="Rhea" id="RHEA-COMP:10698"/>
        <dbReference type="Rhea" id="RHEA-COMP:10700"/>
        <dbReference type="ChEBI" id="CHEBI:15377"/>
        <dbReference type="ChEBI" id="CHEBI:29950"/>
        <dbReference type="ChEBI" id="CHEBI:50058"/>
        <dbReference type="ChEBI" id="CHEBI:57844"/>
        <dbReference type="ChEBI" id="CHEBI:58772"/>
        <dbReference type="EC" id="1.8.4.11"/>
    </reaction>
</comment>
<comment type="similarity">
    <text evidence="2">Belongs to the MsrA Met sulfoxide reductase family.</text>
</comment>
<accession>Q92SY7</accession>
<gene>
    <name type="primary">msrA1</name>
    <name type="ordered locus">R00210</name>
    <name type="ORF">SMc02885</name>
</gene>
<protein>
    <recommendedName>
        <fullName>Peptide methionine sulfoxide reductase MsrA 1</fullName>
        <shortName>Protein-methionine-S-oxide reductase 1</shortName>
        <ecNumber>1.8.4.11</ecNumber>
    </recommendedName>
    <alternativeName>
        <fullName>Peptide-methionine (S)-S-oxide reductase 1</fullName>
        <shortName>Peptide Met(O) reductase 1</shortName>
    </alternativeName>
</protein>
<keyword id="KW-0560">Oxidoreductase</keyword>
<keyword id="KW-1185">Reference proteome</keyword>
<organism>
    <name type="scientific">Rhizobium meliloti (strain 1021)</name>
    <name type="common">Ensifer meliloti</name>
    <name type="synonym">Sinorhizobium meliloti</name>
    <dbReference type="NCBI Taxonomy" id="266834"/>
    <lineage>
        <taxon>Bacteria</taxon>
        <taxon>Pseudomonadati</taxon>
        <taxon>Pseudomonadota</taxon>
        <taxon>Alphaproteobacteria</taxon>
        <taxon>Hyphomicrobiales</taxon>
        <taxon>Rhizobiaceae</taxon>
        <taxon>Sinorhizobium/Ensifer group</taxon>
        <taxon>Sinorhizobium</taxon>
    </lineage>
</organism>
<sequence length="217" mass="24015">MFLIDMFNKKTILPDAATALPGREEEIPTATTHFVSGRPLQGPYPEGMKKVLFGMGCFWGAERLLWEIPGVYVTAAGYSGGLTPNPTYQETTTGLTGHTEVVLVVYDPAKVSLQRLLKTFFEEHDPTQGMRQGNDVGTTYRSAIYVYDEEQLAEANAARNAFQKALRVYNHDREITTEIAKAGPFYFAEDYHQQYLAKNPDGYCGLRGTGVSCPIGA</sequence>
<name>MSRA1_RHIME</name>
<proteinExistence type="inferred from homology"/>
<feature type="chain" id="PRO_0000138573" description="Peptide methionine sulfoxide reductase MsrA 1">
    <location>
        <begin position="1"/>
        <end position="217"/>
    </location>
</feature>
<feature type="active site" evidence="1">
    <location>
        <position position="57"/>
    </location>
</feature>
<reference key="1">
    <citation type="journal article" date="2001" name="Proc. Natl. Acad. Sci. U.S.A.">
        <title>Analysis of the chromosome sequence of the legume symbiont Sinorhizobium meliloti strain 1021.</title>
        <authorList>
            <person name="Capela D."/>
            <person name="Barloy-Hubler F."/>
            <person name="Gouzy J."/>
            <person name="Bothe G."/>
            <person name="Ampe F."/>
            <person name="Batut J."/>
            <person name="Boistard P."/>
            <person name="Becker A."/>
            <person name="Boutry M."/>
            <person name="Cadieu E."/>
            <person name="Dreano S."/>
            <person name="Gloux S."/>
            <person name="Godrie T."/>
            <person name="Goffeau A."/>
            <person name="Kahn D."/>
            <person name="Kiss E."/>
            <person name="Lelaure V."/>
            <person name="Masuy D."/>
            <person name="Pohl T."/>
            <person name="Portetelle D."/>
            <person name="Puehler A."/>
            <person name="Purnelle B."/>
            <person name="Ramsperger U."/>
            <person name="Renard C."/>
            <person name="Thebault P."/>
            <person name="Vandenbol M."/>
            <person name="Weidner S."/>
            <person name="Galibert F."/>
        </authorList>
    </citation>
    <scope>NUCLEOTIDE SEQUENCE [LARGE SCALE GENOMIC DNA]</scope>
    <source>
        <strain>1021</strain>
    </source>
</reference>
<reference key="2">
    <citation type="journal article" date="2001" name="Science">
        <title>The composite genome of the legume symbiont Sinorhizobium meliloti.</title>
        <authorList>
            <person name="Galibert F."/>
            <person name="Finan T.M."/>
            <person name="Long S.R."/>
            <person name="Puehler A."/>
            <person name="Abola P."/>
            <person name="Ampe F."/>
            <person name="Barloy-Hubler F."/>
            <person name="Barnett M.J."/>
            <person name="Becker A."/>
            <person name="Boistard P."/>
            <person name="Bothe G."/>
            <person name="Boutry M."/>
            <person name="Bowser L."/>
            <person name="Buhrmester J."/>
            <person name="Cadieu E."/>
            <person name="Capela D."/>
            <person name="Chain P."/>
            <person name="Cowie A."/>
            <person name="Davis R.W."/>
            <person name="Dreano S."/>
            <person name="Federspiel N.A."/>
            <person name="Fisher R.F."/>
            <person name="Gloux S."/>
            <person name="Godrie T."/>
            <person name="Goffeau A."/>
            <person name="Golding B."/>
            <person name="Gouzy J."/>
            <person name="Gurjal M."/>
            <person name="Hernandez-Lucas I."/>
            <person name="Hong A."/>
            <person name="Huizar L."/>
            <person name="Hyman R.W."/>
            <person name="Jones T."/>
            <person name="Kahn D."/>
            <person name="Kahn M.L."/>
            <person name="Kalman S."/>
            <person name="Keating D.H."/>
            <person name="Kiss E."/>
            <person name="Komp C."/>
            <person name="Lelaure V."/>
            <person name="Masuy D."/>
            <person name="Palm C."/>
            <person name="Peck M.C."/>
            <person name="Pohl T.M."/>
            <person name="Portetelle D."/>
            <person name="Purnelle B."/>
            <person name="Ramsperger U."/>
            <person name="Surzycki R."/>
            <person name="Thebault P."/>
            <person name="Vandenbol M."/>
            <person name="Vorhoelter F.J."/>
            <person name="Weidner S."/>
            <person name="Wells D.H."/>
            <person name="Wong K."/>
            <person name="Yeh K.-C."/>
            <person name="Batut J."/>
        </authorList>
    </citation>
    <scope>NUCLEOTIDE SEQUENCE [LARGE SCALE GENOMIC DNA]</scope>
    <source>
        <strain>1021</strain>
    </source>
</reference>
<evidence type="ECO:0000250" key="1"/>
<evidence type="ECO:0000305" key="2"/>
<dbReference type="EC" id="1.8.4.11"/>
<dbReference type="EMBL" id="AL591688">
    <property type="protein sequence ID" value="CAC41597.1"/>
    <property type="molecule type" value="Genomic_DNA"/>
</dbReference>
<dbReference type="RefSeq" id="NP_384316.1">
    <property type="nucleotide sequence ID" value="NC_003047.1"/>
</dbReference>
<dbReference type="SMR" id="Q92SY7"/>
<dbReference type="EnsemblBacteria" id="CAC41597">
    <property type="protein sequence ID" value="CAC41597"/>
    <property type="gene ID" value="SMc02885"/>
</dbReference>
<dbReference type="KEGG" id="sme:SMc02885"/>
<dbReference type="PATRIC" id="fig|266834.11.peg.1574"/>
<dbReference type="eggNOG" id="COG0225">
    <property type="taxonomic scope" value="Bacteria"/>
</dbReference>
<dbReference type="HOGENOM" id="CLU_031040_10_3_5"/>
<dbReference type="OrthoDB" id="4174719at2"/>
<dbReference type="Proteomes" id="UP000001976">
    <property type="component" value="Chromosome"/>
</dbReference>
<dbReference type="GO" id="GO:0005737">
    <property type="term" value="C:cytoplasm"/>
    <property type="evidence" value="ECO:0007669"/>
    <property type="project" value="TreeGrafter"/>
</dbReference>
<dbReference type="GO" id="GO:0036456">
    <property type="term" value="F:L-methionine-(S)-S-oxide reductase activity"/>
    <property type="evidence" value="ECO:0007669"/>
    <property type="project" value="TreeGrafter"/>
</dbReference>
<dbReference type="GO" id="GO:0008113">
    <property type="term" value="F:peptide-methionine (S)-S-oxide reductase activity"/>
    <property type="evidence" value="ECO:0007669"/>
    <property type="project" value="UniProtKB-UniRule"/>
</dbReference>
<dbReference type="GO" id="GO:0034599">
    <property type="term" value="P:cellular response to oxidative stress"/>
    <property type="evidence" value="ECO:0007669"/>
    <property type="project" value="TreeGrafter"/>
</dbReference>
<dbReference type="GO" id="GO:0036211">
    <property type="term" value="P:protein modification process"/>
    <property type="evidence" value="ECO:0007669"/>
    <property type="project" value="UniProtKB-UniRule"/>
</dbReference>
<dbReference type="FunFam" id="3.30.1060.10:FF:000001">
    <property type="entry name" value="Peptide methionine sulfoxide reductase MsrA"/>
    <property type="match status" value="1"/>
</dbReference>
<dbReference type="Gene3D" id="3.30.1060.10">
    <property type="entry name" value="Peptide methionine sulphoxide reductase MsrA"/>
    <property type="match status" value="1"/>
</dbReference>
<dbReference type="HAMAP" id="MF_01401">
    <property type="entry name" value="MsrA"/>
    <property type="match status" value="1"/>
</dbReference>
<dbReference type="InterPro" id="IPR002569">
    <property type="entry name" value="Met_Sox_Rdtase_MsrA_dom"/>
</dbReference>
<dbReference type="InterPro" id="IPR036509">
    <property type="entry name" value="Met_Sox_Rdtase_MsrA_sf"/>
</dbReference>
<dbReference type="InterPro" id="IPR050162">
    <property type="entry name" value="MsrA_MetSO_reductase"/>
</dbReference>
<dbReference type="NCBIfam" id="TIGR00401">
    <property type="entry name" value="msrA"/>
    <property type="match status" value="1"/>
</dbReference>
<dbReference type="PANTHER" id="PTHR42799">
    <property type="entry name" value="MITOCHONDRIAL PEPTIDE METHIONINE SULFOXIDE REDUCTASE"/>
    <property type="match status" value="1"/>
</dbReference>
<dbReference type="PANTHER" id="PTHR42799:SF2">
    <property type="entry name" value="MITOCHONDRIAL PEPTIDE METHIONINE SULFOXIDE REDUCTASE"/>
    <property type="match status" value="1"/>
</dbReference>
<dbReference type="Pfam" id="PF01625">
    <property type="entry name" value="PMSR"/>
    <property type="match status" value="1"/>
</dbReference>
<dbReference type="SUPFAM" id="SSF55068">
    <property type="entry name" value="Peptide methionine sulfoxide reductase"/>
    <property type="match status" value="1"/>
</dbReference>